<keyword id="KW-0963">Cytoplasm</keyword>
<keyword id="KW-0238">DNA-binding</keyword>
<keyword id="KW-0408">Iron</keyword>
<keyword id="KW-0479">Metal-binding</keyword>
<keyword id="KW-0678">Repressor</keyword>
<keyword id="KW-0804">Transcription</keyword>
<keyword id="KW-0805">Transcription regulation</keyword>
<keyword id="KW-0862">Zinc</keyword>
<sequence length="141" mass="16418">MNKPYTKPDYEQELRRAGVRITRPRRIILNILNETEDHPDALEIFRRAVEEDDSISLSTVYRTMKLLEERGAIHRHAFAGGPSRFEQASGAHHDHIIDMDSGDVVEFHSDKIEKLQEEIARSLGFEIVHHRLELYCKKLKS</sequence>
<accession>P0C106</accession>
<accession>O30976</accession>
<accession>Q57BM3</accession>
<gene>
    <name type="primary">fur</name>
    <name type="ordered locus">BruAb1_1641</name>
</gene>
<protein>
    <recommendedName>
        <fullName>Ferric uptake regulation protein</fullName>
        <shortName>Ferric uptake regulator</shortName>
    </recommendedName>
</protein>
<proteinExistence type="inferred from homology"/>
<reference key="1">
    <citation type="journal article" date="2005" name="J. Bacteriol.">
        <title>Completion of the genome sequence of Brucella abortus and comparison to the highly similar genomes of Brucella melitensis and Brucella suis.</title>
        <authorList>
            <person name="Halling S.M."/>
            <person name="Peterson-Burch B.D."/>
            <person name="Bricker B.J."/>
            <person name="Zuerner R.L."/>
            <person name="Qing Z."/>
            <person name="Li L.-L."/>
            <person name="Kapur V."/>
            <person name="Alt D.P."/>
            <person name="Olsen S.C."/>
        </authorList>
    </citation>
    <scope>NUCLEOTIDE SEQUENCE [LARGE SCALE GENOMIC DNA]</scope>
    <source>
        <strain>9-941</strain>
    </source>
</reference>
<dbReference type="EMBL" id="AE017223">
    <property type="protein sequence ID" value="AAX74961.1"/>
    <property type="molecule type" value="Genomic_DNA"/>
</dbReference>
<dbReference type="RefSeq" id="WP_002964746.1">
    <property type="nucleotide sequence ID" value="NC_006932.1"/>
</dbReference>
<dbReference type="SMR" id="P0C106"/>
<dbReference type="EnsemblBacteria" id="AAX74961">
    <property type="protein sequence ID" value="AAX74961"/>
    <property type="gene ID" value="BruAb1_1641"/>
</dbReference>
<dbReference type="KEGG" id="bmb:BruAb1_1641"/>
<dbReference type="HOGENOM" id="CLU_096072_3_2_5"/>
<dbReference type="Proteomes" id="UP000000540">
    <property type="component" value="Chromosome I"/>
</dbReference>
<dbReference type="GO" id="GO:0005829">
    <property type="term" value="C:cytosol"/>
    <property type="evidence" value="ECO:0007669"/>
    <property type="project" value="TreeGrafter"/>
</dbReference>
<dbReference type="GO" id="GO:0003700">
    <property type="term" value="F:DNA-binding transcription factor activity"/>
    <property type="evidence" value="ECO:0007669"/>
    <property type="project" value="InterPro"/>
</dbReference>
<dbReference type="GO" id="GO:0000976">
    <property type="term" value="F:transcription cis-regulatory region binding"/>
    <property type="evidence" value="ECO:0007669"/>
    <property type="project" value="TreeGrafter"/>
</dbReference>
<dbReference type="GO" id="GO:0008270">
    <property type="term" value="F:zinc ion binding"/>
    <property type="evidence" value="ECO:0007669"/>
    <property type="project" value="TreeGrafter"/>
</dbReference>
<dbReference type="GO" id="GO:0045892">
    <property type="term" value="P:negative regulation of DNA-templated transcription"/>
    <property type="evidence" value="ECO:0007669"/>
    <property type="project" value="TreeGrafter"/>
</dbReference>
<dbReference type="GO" id="GO:1900376">
    <property type="term" value="P:regulation of secondary metabolite biosynthetic process"/>
    <property type="evidence" value="ECO:0007669"/>
    <property type="project" value="TreeGrafter"/>
</dbReference>
<dbReference type="CDD" id="cd07153">
    <property type="entry name" value="Fur_like"/>
    <property type="match status" value="1"/>
</dbReference>
<dbReference type="Gene3D" id="3.30.1490.190">
    <property type="match status" value="1"/>
</dbReference>
<dbReference type="Gene3D" id="1.10.10.10">
    <property type="entry name" value="Winged helix-like DNA-binding domain superfamily/Winged helix DNA-binding domain"/>
    <property type="match status" value="1"/>
</dbReference>
<dbReference type="InterPro" id="IPR002481">
    <property type="entry name" value="FUR"/>
</dbReference>
<dbReference type="InterPro" id="IPR043135">
    <property type="entry name" value="Fur_C"/>
</dbReference>
<dbReference type="InterPro" id="IPR036388">
    <property type="entry name" value="WH-like_DNA-bd_sf"/>
</dbReference>
<dbReference type="InterPro" id="IPR036390">
    <property type="entry name" value="WH_DNA-bd_sf"/>
</dbReference>
<dbReference type="PANTHER" id="PTHR33202:SF2">
    <property type="entry name" value="FERRIC UPTAKE REGULATION PROTEIN"/>
    <property type="match status" value="1"/>
</dbReference>
<dbReference type="PANTHER" id="PTHR33202">
    <property type="entry name" value="ZINC UPTAKE REGULATION PROTEIN"/>
    <property type="match status" value="1"/>
</dbReference>
<dbReference type="Pfam" id="PF01475">
    <property type="entry name" value="FUR"/>
    <property type="match status" value="1"/>
</dbReference>
<dbReference type="SUPFAM" id="SSF46785">
    <property type="entry name" value="Winged helix' DNA-binding domain"/>
    <property type="match status" value="1"/>
</dbReference>
<organism>
    <name type="scientific">Brucella abortus biovar 1 (strain 9-941)</name>
    <dbReference type="NCBI Taxonomy" id="262698"/>
    <lineage>
        <taxon>Bacteria</taxon>
        <taxon>Pseudomonadati</taxon>
        <taxon>Pseudomonadota</taxon>
        <taxon>Alphaproteobacteria</taxon>
        <taxon>Hyphomicrobiales</taxon>
        <taxon>Brucellaceae</taxon>
        <taxon>Brucella/Ochrobactrum group</taxon>
        <taxon>Brucella</taxon>
    </lineage>
</organism>
<name>FUR_BRUAB</name>
<comment type="function">
    <text evidence="1">Acts as a global negative controlling element, employing Fe(2+) as a cofactor to bind the operator of the repressed genes.</text>
</comment>
<comment type="subunit">
    <text evidence="1">Homodimer.</text>
</comment>
<comment type="subcellular location">
    <subcellularLocation>
        <location evidence="1">Cytoplasm</location>
    </subcellularLocation>
</comment>
<comment type="similarity">
    <text evidence="2">Belongs to the Fur family.</text>
</comment>
<feature type="chain" id="PRO_0000095544" description="Ferric uptake regulation protein">
    <location>
        <begin position="1"/>
        <end position="141"/>
    </location>
</feature>
<feature type="region of interest" description="DNA-binding" evidence="1">
    <location>
        <begin position="1"/>
        <end position="89"/>
    </location>
</feature>
<feature type="region of interest" description="Dimerization" evidence="1">
    <location>
        <begin position="90"/>
        <end position="141"/>
    </location>
</feature>
<feature type="binding site" evidence="1">
    <location>
        <position position="38"/>
    </location>
    <ligand>
        <name>Zn(2+)</name>
        <dbReference type="ChEBI" id="CHEBI:29105"/>
    </ligand>
</feature>
<feature type="binding site" evidence="1">
    <location>
        <position position="86"/>
    </location>
    <ligand>
        <name>Zn(2+)</name>
        <dbReference type="ChEBI" id="CHEBI:29105"/>
    </ligand>
</feature>
<feature type="binding site" evidence="1">
    <location>
        <position position="92"/>
    </location>
    <ligand>
        <name>Fe cation</name>
        <dbReference type="ChEBI" id="CHEBI:24875"/>
    </ligand>
</feature>
<feature type="binding site" evidence="1">
    <location>
        <position position="94"/>
    </location>
    <ligand>
        <name>Fe cation</name>
        <dbReference type="ChEBI" id="CHEBI:24875"/>
    </ligand>
</feature>
<feature type="binding site" evidence="1">
    <location>
        <position position="95"/>
    </location>
    <ligand>
        <name>Zn(2+)</name>
        <dbReference type="ChEBI" id="CHEBI:29105"/>
    </ligand>
</feature>
<feature type="binding site" evidence="1">
    <location>
        <position position="106"/>
    </location>
    <ligand>
        <name>Zn(2+)</name>
        <dbReference type="ChEBI" id="CHEBI:29105"/>
    </ligand>
</feature>
<feature type="binding site" evidence="1">
    <location>
        <position position="113"/>
    </location>
    <ligand>
        <name>Fe cation</name>
        <dbReference type="ChEBI" id="CHEBI:24875"/>
    </ligand>
</feature>
<feature type="binding site" evidence="1">
    <location>
        <position position="130"/>
    </location>
    <ligand>
        <name>Fe cation</name>
        <dbReference type="ChEBI" id="CHEBI:24875"/>
    </ligand>
</feature>
<evidence type="ECO:0000250" key="1"/>
<evidence type="ECO:0000305" key="2"/>